<keyword id="KW-0963">Cytoplasm</keyword>
<keyword id="KW-0324">Glycolysis</keyword>
<keyword id="KW-0520">NAD</keyword>
<keyword id="KW-0560">Oxidoreductase</keyword>
<keyword id="KW-1185">Reference proteome</keyword>
<dbReference type="EC" id="1.2.1.12"/>
<dbReference type="EMBL" id="CR380956">
    <property type="protein sequence ID" value="CAG60678.1"/>
    <property type="molecule type" value="Genomic_DNA"/>
</dbReference>
<dbReference type="RefSeq" id="XP_447731.1">
    <property type="nucleotide sequence ID" value="XM_447731.1"/>
</dbReference>
<dbReference type="SMR" id="Q6FPW3"/>
<dbReference type="STRING" id="284593.Q6FPW3"/>
<dbReference type="EnsemblFungi" id="CAGL0J00451g-T">
    <property type="protein sequence ID" value="CAGL0J00451g-T-p1"/>
    <property type="gene ID" value="CAGL0J00451g"/>
</dbReference>
<dbReference type="KEGG" id="cgr:2889895"/>
<dbReference type="CGD" id="CAL0133056">
    <property type="gene designation" value="CAGL0J00451g"/>
</dbReference>
<dbReference type="VEuPathDB" id="FungiDB:B1J91_J00451g"/>
<dbReference type="VEuPathDB" id="FungiDB:CAGL0J00451g"/>
<dbReference type="eggNOG" id="KOG0657">
    <property type="taxonomic scope" value="Eukaryota"/>
</dbReference>
<dbReference type="HOGENOM" id="CLU_030140_0_3_1"/>
<dbReference type="InParanoid" id="Q6FPW3"/>
<dbReference type="OMA" id="TCQMIRL"/>
<dbReference type="UniPathway" id="UPA00109">
    <property type="reaction ID" value="UER00184"/>
</dbReference>
<dbReference type="Proteomes" id="UP000002428">
    <property type="component" value="Chromosome J"/>
</dbReference>
<dbReference type="GO" id="GO:0005829">
    <property type="term" value="C:cytosol"/>
    <property type="evidence" value="ECO:0000314"/>
    <property type="project" value="CGD"/>
</dbReference>
<dbReference type="GO" id="GO:0005576">
    <property type="term" value="C:extracellular region"/>
    <property type="evidence" value="ECO:0000314"/>
    <property type="project" value="CGD"/>
</dbReference>
<dbReference type="GO" id="GO:0062040">
    <property type="term" value="C:fungal biofilm matrix"/>
    <property type="evidence" value="ECO:0000314"/>
    <property type="project" value="CGD"/>
</dbReference>
<dbReference type="GO" id="GO:0004365">
    <property type="term" value="F:glyceraldehyde-3-phosphate dehydrogenase (NAD+) (phosphorylating) activity"/>
    <property type="evidence" value="ECO:0007669"/>
    <property type="project" value="UniProtKB-EC"/>
</dbReference>
<dbReference type="GO" id="GO:0051287">
    <property type="term" value="F:NAD binding"/>
    <property type="evidence" value="ECO:0007669"/>
    <property type="project" value="InterPro"/>
</dbReference>
<dbReference type="GO" id="GO:0050661">
    <property type="term" value="F:NADP binding"/>
    <property type="evidence" value="ECO:0007669"/>
    <property type="project" value="InterPro"/>
</dbReference>
<dbReference type="GO" id="GO:0006006">
    <property type="term" value="P:glucose metabolic process"/>
    <property type="evidence" value="ECO:0007669"/>
    <property type="project" value="InterPro"/>
</dbReference>
<dbReference type="GO" id="GO:0006096">
    <property type="term" value="P:glycolytic process"/>
    <property type="evidence" value="ECO:0007669"/>
    <property type="project" value="UniProtKB-UniPathway"/>
</dbReference>
<dbReference type="CDD" id="cd18126">
    <property type="entry name" value="GAPDH_I_C"/>
    <property type="match status" value="1"/>
</dbReference>
<dbReference type="CDD" id="cd05214">
    <property type="entry name" value="GAPDH_I_N"/>
    <property type="match status" value="1"/>
</dbReference>
<dbReference type="FunFam" id="3.30.360.10:FF:000001">
    <property type="entry name" value="Glyceraldehyde-3-phosphate dehydrogenase"/>
    <property type="match status" value="1"/>
</dbReference>
<dbReference type="FunFam" id="3.40.50.720:FF:000020">
    <property type="entry name" value="Glyceraldehyde-3-phosphate dehydrogenase"/>
    <property type="match status" value="1"/>
</dbReference>
<dbReference type="Gene3D" id="3.30.360.10">
    <property type="entry name" value="Dihydrodipicolinate Reductase, domain 2"/>
    <property type="match status" value="1"/>
</dbReference>
<dbReference type="Gene3D" id="3.40.50.720">
    <property type="entry name" value="NAD(P)-binding Rossmann-like Domain"/>
    <property type="match status" value="1"/>
</dbReference>
<dbReference type="InterPro" id="IPR020831">
    <property type="entry name" value="GlycerAld/Erythrose_P_DH"/>
</dbReference>
<dbReference type="InterPro" id="IPR020830">
    <property type="entry name" value="GlycerAld_3-P_DH_AS"/>
</dbReference>
<dbReference type="InterPro" id="IPR020829">
    <property type="entry name" value="GlycerAld_3-P_DH_cat"/>
</dbReference>
<dbReference type="InterPro" id="IPR020828">
    <property type="entry name" value="GlycerAld_3-P_DH_NAD(P)-bd"/>
</dbReference>
<dbReference type="InterPro" id="IPR006424">
    <property type="entry name" value="Glyceraldehyde-3-P_DH_1"/>
</dbReference>
<dbReference type="InterPro" id="IPR036291">
    <property type="entry name" value="NAD(P)-bd_dom_sf"/>
</dbReference>
<dbReference type="NCBIfam" id="TIGR01534">
    <property type="entry name" value="GAPDH-I"/>
    <property type="match status" value="1"/>
</dbReference>
<dbReference type="PANTHER" id="PTHR10836">
    <property type="entry name" value="GLYCERALDEHYDE 3-PHOSPHATE DEHYDROGENASE"/>
    <property type="match status" value="1"/>
</dbReference>
<dbReference type="PANTHER" id="PTHR10836:SF76">
    <property type="entry name" value="GLYCERALDEHYDE-3-PHOSPHATE DEHYDROGENASE-RELATED"/>
    <property type="match status" value="1"/>
</dbReference>
<dbReference type="Pfam" id="PF02800">
    <property type="entry name" value="Gp_dh_C"/>
    <property type="match status" value="1"/>
</dbReference>
<dbReference type="Pfam" id="PF00044">
    <property type="entry name" value="Gp_dh_N"/>
    <property type="match status" value="1"/>
</dbReference>
<dbReference type="PIRSF" id="PIRSF000149">
    <property type="entry name" value="GAP_DH"/>
    <property type="match status" value="1"/>
</dbReference>
<dbReference type="PRINTS" id="PR00078">
    <property type="entry name" value="G3PDHDRGNASE"/>
</dbReference>
<dbReference type="SMART" id="SM00846">
    <property type="entry name" value="Gp_dh_N"/>
    <property type="match status" value="1"/>
</dbReference>
<dbReference type="SUPFAM" id="SSF55347">
    <property type="entry name" value="Glyceraldehyde-3-phosphate dehydrogenase-like, C-terminal domain"/>
    <property type="match status" value="1"/>
</dbReference>
<dbReference type="SUPFAM" id="SSF51735">
    <property type="entry name" value="NAD(P)-binding Rossmann-fold domains"/>
    <property type="match status" value="1"/>
</dbReference>
<dbReference type="PROSITE" id="PS00071">
    <property type="entry name" value="GAPDH"/>
    <property type="match status" value="1"/>
</dbReference>
<proteinExistence type="inferred from homology"/>
<evidence type="ECO:0000250" key="1"/>
<evidence type="ECO:0000255" key="2">
    <source>
        <dbReference type="PROSITE-ProRule" id="PRU10009"/>
    </source>
</evidence>
<evidence type="ECO:0000305" key="3"/>
<name>G3P1_CANGA</name>
<accession>Q6FPW3</accession>
<comment type="catalytic activity">
    <reaction evidence="2">
        <text>D-glyceraldehyde 3-phosphate + phosphate + NAD(+) = (2R)-3-phospho-glyceroyl phosphate + NADH + H(+)</text>
        <dbReference type="Rhea" id="RHEA:10300"/>
        <dbReference type="ChEBI" id="CHEBI:15378"/>
        <dbReference type="ChEBI" id="CHEBI:43474"/>
        <dbReference type="ChEBI" id="CHEBI:57540"/>
        <dbReference type="ChEBI" id="CHEBI:57604"/>
        <dbReference type="ChEBI" id="CHEBI:57945"/>
        <dbReference type="ChEBI" id="CHEBI:59776"/>
        <dbReference type="EC" id="1.2.1.12"/>
    </reaction>
</comment>
<comment type="pathway">
    <text>Carbohydrate degradation; glycolysis; pyruvate from D-glyceraldehyde 3-phosphate: step 1/5.</text>
</comment>
<comment type="subunit">
    <text evidence="1">Homotetramer.</text>
</comment>
<comment type="subcellular location">
    <subcellularLocation>
        <location evidence="1">Cytoplasm</location>
    </subcellularLocation>
</comment>
<comment type="similarity">
    <text evidence="3">Belongs to the glyceraldehyde-3-phosphate dehydrogenase family.</text>
</comment>
<gene>
    <name type="primary">GPD1</name>
    <name type="ordered locus">CAGL0J00451g</name>
</gene>
<feature type="chain" id="PRO_0000145542" description="Glyceraldehyde-3-phosphate dehydrogenase 1">
    <location>
        <begin position="1"/>
        <end position="332"/>
    </location>
</feature>
<feature type="active site" description="Nucleophile" evidence="2">
    <location>
        <position position="150"/>
    </location>
</feature>
<feature type="binding site" evidence="1">
    <location>
        <begin position="11"/>
        <end position="12"/>
    </location>
    <ligand>
        <name>NAD(+)</name>
        <dbReference type="ChEBI" id="CHEBI:57540"/>
    </ligand>
</feature>
<feature type="binding site" evidence="1">
    <location>
        <position position="33"/>
    </location>
    <ligand>
        <name>NAD(+)</name>
        <dbReference type="ChEBI" id="CHEBI:57540"/>
    </ligand>
</feature>
<feature type="binding site" evidence="1">
    <location>
        <position position="78"/>
    </location>
    <ligand>
        <name>NAD(+)</name>
        <dbReference type="ChEBI" id="CHEBI:57540"/>
    </ligand>
</feature>
<feature type="binding site" evidence="1">
    <location>
        <begin position="149"/>
        <end position="151"/>
    </location>
    <ligand>
        <name>D-glyceraldehyde 3-phosphate</name>
        <dbReference type="ChEBI" id="CHEBI:59776"/>
    </ligand>
</feature>
<feature type="binding site" evidence="1">
    <location>
        <position position="180"/>
    </location>
    <ligand>
        <name>D-glyceraldehyde 3-phosphate</name>
        <dbReference type="ChEBI" id="CHEBI:59776"/>
    </ligand>
</feature>
<feature type="binding site" evidence="1">
    <location>
        <begin position="209"/>
        <end position="210"/>
    </location>
    <ligand>
        <name>D-glyceraldehyde 3-phosphate</name>
        <dbReference type="ChEBI" id="CHEBI:59776"/>
    </ligand>
</feature>
<feature type="binding site" evidence="1">
    <location>
        <position position="232"/>
    </location>
    <ligand>
        <name>D-glyceraldehyde 3-phosphate</name>
        <dbReference type="ChEBI" id="CHEBI:59776"/>
    </ligand>
</feature>
<feature type="binding site" evidence="1">
    <location>
        <position position="314"/>
    </location>
    <ligand>
        <name>NAD(+)</name>
        <dbReference type="ChEBI" id="CHEBI:57540"/>
    </ligand>
</feature>
<feature type="site" description="Activates thiol group during catalysis" evidence="1">
    <location>
        <position position="177"/>
    </location>
</feature>
<sequence length="332" mass="35919">MVRVAINGFGRIGRIVLRIAMKRDGIDVVAINDPFITNDYAAYMFKYDSTHGRYDGEVTHDDKDLIIDGKAIKCYQERDPADLPWGDNDIDIVIEATGVFTAKDLAEKHITAGAKKVVITGPSATAPMFVKGVNDDKYTSDVTVISNASCTTNCLAPLAKVLQDNFGIEEALMSTVHSQTATQKTVDGPSKKDWRGGRTASANIIPSSTGAAKAVTKVLPELEGKLTGMAFRVPTVDVSVVDLTVRFAKDVTYDEIKAAIKKASEGEMKGILAYTEDAVVSTDFLGDTHSSIFDASAGIQLSPRFVKLVSWYDNEYGFSARVVDMVELVSKA</sequence>
<reference key="1">
    <citation type="journal article" date="2004" name="Nature">
        <title>Genome evolution in yeasts.</title>
        <authorList>
            <person name="Dujon B."/>
            <person name="Sherman D."/>
            <person name="Fischer G."/>
            <person name="Durrens P."/>
            <person name="Casaregola S."/>
            <person name="Lafontaine I."/>
            <person name="de Montigny J."/>
            <person name="Marck C."/>
            <person name="Neuveglise C."/>
            <person name="Talla E."/>
            <person name="Goffard N."/>
            <person name="Frangeul L."/>
            <person name="Aigle M."/>
            <person name="Anthouard V."/>
            <person name="Babour A."/>
            <person name="Barbe V."/>
            <person name="Barnay S."/>
            <person name="Blanchin S."/>
            <person name="Beckerich J.-M."/>
            <person name="Beyne E."/>
            <person name="Bleykasten C."/>
            <person name="Boisrame A."/>
            <person name="Boyer J."/>
            <person name="Cattolico L."/>
            <person name="Confanioleri F."/>
            <person name="de Daruvar A."/>
            <person name="Despons L."/>
            <person name="Fabre E."/>
            <person name="Fairhead C."/>
            <person name="Ferry-Dumazet H."/>
            <person name="Groppi A."/>
            <person name="Hantraye F."/>
            <person name="Hennequin C."/>
            <person name="Jauniaux N."/>
            <person name="Joyet P."/>
            <person name="Kachouri R."/>
            <person name="Kerrest A."/>
            <person name="Koszul R."/>
            <person name="Lemaire M."/>
            <person name="Lesur I."/>
            <person name="Ma L."/>
            <person name="Muller H."/>
            <person name="Nicaud J.-M."/>
            <person name="Nikolski M."/>
            <person name="Oztas S."/>
            <person name="Ozier-Kalogeropoulos O."/>
            <person name="Pellenz S."/>
            <person name="Potier S."/>
            <person name="Richard G.-F."/>
            <person name="Straub M.-L."/>
            <person name="Suleau A."/>
            <person name="Swennen D."/>
            <person name="Tekaia F."/>
            <person name="Wesolowski-Louvel M."/>
            <person name="Westhof E."/>
            <person name="Wirth B."/>
            <person name="Zeniou-Meyer M."/>
            <person name="Zivanovic Y."/>
            <person name="Bolotin-Fukuhara M."/>
            <person name="Thierry A."/>
            <person name="Bouchier C."/>
            <person name="Caudron B."/>
            <person name="Scarpelli C."/>
            <person name="Gaillardin C."/>
            <person name="Weissenbach J."/>
            <person name="Wincker P."/>
            <person name="Souciet J.-L."/>
        </authorList>
    </citation>
    <scope>NUCLEOTIDE SEQUENCE [LARGE SCALE GENOMIC DNA]</scope>
    <source>
        <strain>ATCC 2001 / BCRC 20586 / JCM 3761 / NBRC 0622 / NRRL Y-65 / CBS 138</strain>
    </source>
</reference>
<protein>
    <recommendedName>
        <fullName>Glyceraldehyde-3-phosphate dehydrogenase 1</fullName>
        <shortName>GAPDH 1</shortName>
        <ecNumber>1.2.1.12</ecNumber>
    </recommendedName>
</protein>
<organism>
    <name type="scientific">Candida glabrata (strain ATCC 2001 / BCRC 20586 / JCM 3761 / NBRC 0622 / NRRL Y-65 / CBS 138)</name>
    <name type="common">Yeast</name>
    <name type="synonym">Nakaseomyces glabratus</name>
    <dbReference type="NCBI Taxonomy" id="284593"/>
    <lineage>
        <taxon>Eukaryota</taxon>
        <taxon>Fungi</taxon>
        <taxon>Dikarya</taxon>
        <taxon>Ascomycota</taxon>
        <taxon>Saccharomycotina</taxon>
        <taxon>Saccharomycetes</taxon>
        <taxon>Saccharomycetales</taxon>
        <taxon>Saccharomycetaceae</taxon>
        <taxon>Nakaseomyces</taxon>
    </lineage>
</organism>